<organismHost>
    <name type="scientific">Gallus gallus</name>
    <name type="common">Chicken</name>
    <dbReference type="NCBI Taxonomy" id="9031"/>
</organismHost>
<dbReference type="EMBL" id="AF243438">
    <property type="protein sequence ID" value="AAG14187.1"/>
    <property type="molecule type" value="Genomic_DNA"/>
</dbReference>
<dbReference type="EMBL" id="AF243438">
    <property type="protein sequence ID" value="AAG14276.1"/>
    <property type="molecule type" value="Genomic_DNA"/>
</dbReference>
<dbReference type="Proteomes" id="UP000008072">
    <property type="component" value="Segment"/>
</dbReference>
<accession>Q9DH85</accession>
<proteinExistence type="predicted"/>
<feature type="chain" id="PRO_0000406551" description="Uncharacterized gene 4 protein">
    <location>
        <begin position="1"/>
        <end position="136"/>
    </location>
</feature>
<protein>
    <recommendedName>
        <fullName>Uncharacterized gene 4 protein</fullName>
    </recommendedName>
</protein>
<sequence>MWGRWGKKGNLANRTKLSVNRPRRWRGTRLGNRTQCREDALRRWRLGRAEEGMGSTDGRWWGRAELGAKLLRIGRSGGTDRRLEGGRPRSVDNMGSRDGRWWGRAELGAKFLRIGRRGGTDRRLGTGAMWSVRFIR</sequence>
<reference key="1">
    <citation type="journal article" date="2000" name="J. Virol.">
        <title>The genome of a very virulent Marek's disease virus.</title>
        <authorList>
            <person name="Tulman E.R."/>
            <person name="Afonso C.L."/>
            <person name="Lu Z."/>
            <person name="Zsak L."/>
            <person name="Rock D.L."/>
            <person name="Kutish G.F."/>
        </authorList>
    </citation>
    <scope>NUCLEOTIDE SEQUENCE [LARGE SCALE GENOMIC DNA]</scope>
</reference>
<name>VG04_GAHVM</name>
<keyword id="KW-1185">Reference proteome</keyword>
<organism>
    <name type="scientific">Gallid herpesvirus 2 (strain Chicken/Md5/ATCC VR-987)</name>
    <name type="common">GaHV-2</name>
    <name type="synonym">Marek's disease herpesvirus type 1</name>
    <dbReference type="NCBI Taxonomy" id="10389"/>
    <lineage>
        <taxon>Viruses</taxon>
        <taxon>Duplodnaviria</taxon>
        <taxon>Heunggongvirae</taxon>
        <taxon>Peploviricota</taxon>
        <taxon>Herviviricetes</taxon>
        <taxon>Herpesvirales</taxon>
        <taxon>Orthoherpesviridae</taxon>
        <taxon>Alphaherpesvirinae</taxon>
        <taxon>Mardivirus</taxon>
        <taxon>Mardivirus gallidalpha2</taxon>
        <taxon>Gallid alphaherpesvirus 2</taxon>
    </lineage>
</organism>
<gene>
    <name type="primary">MDV004</name>
    <name type="synonym">MDV077</name>
</gene>